<protein>
    <recommendedName>
        <fullName evidence="1">Large ribosomal subunit protein uL1</fullName>
    </recommendedName>
    <alternativeName>
        <fullName evidence="2">50S ribosomal protein L1</fullName>
    </alternativeName>
</protein>
<organism>
    <name type="scientific">Rickettsia canadensis (strain McKiel)</name>
    <dbReference type="NCBI Taxonomy" id="293613"/>
    <lineage>
        <taxon>Bacteria</taxon>
        <taxon>Pseudomonadati</taxon>
        <taxon>Pseudomonadota</taxon>
        <taxon>Alphaproteobacteria</taxon>
        <taxon>Rickettsiales</taxon>
        <taxon>Rickettsiaceae</taxon>
        <taxon>Rickettsieae</taxon>
        <taxon>Rickettsia</taxon>
        <taxon>belli group</taxon>
    </lineage>
</organism>
<dbReference type="EMBL" id="CP000409">
    <property type="protein sequence ID" value="ABV73088.1"/>
    <property type="molecule type" value="Genomic_DNA"/>
</dbReference>
<dbReference type="RefSeq" id="WP_012148289.1">
    <property type="nucleotide sequence ID" value="NC_009879.1"/>
</dbReference>
<dbReference type="SMR" id="A8EXK5"/>
<dbReference type="STRING" id="293613.A1E_00700"/>
<dbReference type="KEGG" id="rcm:A1E_00700"/>
<dbReference type="eggNOG" id="COG0081">
    <property type="taxonomic scope" value="Bacteria"/>
</dbReference>
<dbReference type="HOGENOM" id="CLU_062853_0_0_5"/>
<dbReference type="Proteomes" id="UP000007056">
    <property type="component" value="Chromosome"/>
</dbReference>
<dbReference type="GO" id="GO:0015934">
    <property type="term" value="C:large ribosomal subunit"/>
    <property type="evidence" value="ECO:0007669"/>
    <property type="project" value="InterPro"/>
</dbReference>
<dbReference type="GO" id="GO:0019843">
    <property type="term" value="F:rRNA binding"/>
    <property type="evidence" value="ECO:0007669"/>
    <property type="project" value="UniProtKB-UniRule"/>
</dbReference>
<dbReference type="GO" id="GO:0003735">
    <property type="term" value="F:structural constituent of ribosome"/>
    <property type="evidence" value="ECO:0007669"/>
    <property type="project" value="InterPro"/>
</dbReference>
<dbReference type="GO" id="GO:0000049">
    <property type="term" value="F:tRNA binding"/>
    <property type="evidence" value="ECO:0007669"/>
    <property type="project" value="UniProtKB-KW"/>
</dbReference>
<dbReference type="GO" id="GO:0006417">
    <property type="term" value="P:regulation of translation"/>
    <property type="evidence" value="ECO:0007669"/>
    <property type="project" value="UniProtKB-KW"/>
</dbReference>
<dbReference type="GO" id="GO:0006412">
    <property type="term" value="P:translation"/>
    <property type="evidence" value="ECO:0007669"/>
    <property type="project" value="UniProtKB-UniRule"/>
</dbReference>
<dbReference type="CDD" id="cd00403">
    <property type="entry name" value="Ribosomal_L1"/>
    <property type="match status" value="1"/>
</dbReference>
<dbReference type="FunFam" id="3.40.50.790:FF:000001">
    <property type="entry name" value="50S ribosomal protein L1"/>
    <property type="match status" value="1"/>
</dbReference>
<dbReference type="Gene3D" id="3.30.190.20">
    <property type="match status" value="1"/>
</dbReference>
<dbReference type="Gene3D" id="3.40.50.790">
    <property type="match status" value="1"/>
</dbReference>
<dbReference type="HAMAP" id="MF_01318_B">
    <property type="entry name" value="Ribosomal_uL1_B"/>
    <property type="match status" value="1"/>
</dbReference>
<dbReference type="InterPro" id="IPR005878">
    <property type="entry name" value="Ribosom_uL1_bac-type"/>
</dbReference>
<dbReference type="InterPro" id="IPR002143">
    <property type="entry name" value="Ribosomal_uL1"/>
</dbReference>
<dbReference type="InterPro" id="IPR023674">
    <property type="entry name" value="Ribosomal_uL1-like"/>
</dbReference>
<dbReference type="InterPro" id="IPR028364">
    <property type="entry name" value="Ribosomal_uL1/biogenesis"/>
</dbReference>
<dbReference type="InterPro" id="IPR016095">
    <property type="entry name" value="Ribosomal_uL1_3-a/b-sand"/>
</dbReference>
<dbReference type="InterPro" id="IPR023673">
    <property type="entry name" value="Ribosomal_uL1_CS"/>
</dbReference>
<dbReference type="NCBIfam" id="TIGR01169">
    <property type="entry name" value="rplA_bact"/>
    <property type="match status" value="1"/>
</dbReference>
<dbReference type="PANTHER" id="PTHR36427">
    <property type="entry name" value="54S RIBOSOMAL PROTEIN L1, MITOCHONDRIAL"/>
    <property type="match status" value="1"/>
</dbReference>
<dbReference type="PANTHER" id="PTHR36427:SF3">
    <property type="entry name" value="LARGE RIBOSOMAL SUBUNIT PROTEIN UL1M"/>
    <property type="match status" value="1"/>
</dbReference>
<dbReference type="Pfam" id="PF00687">
    <property type="entry name" value="Ribosomal_L1"/>
    <property type="match status" value="1"/>
</dbReference>
<dbReference type="PIRSF" id="PIRSF002155">
    <property type="entry name" value="Ribosomal_L1"/>
    <property type="match status" value="1"/>
</dbReference>
<dbReference type="SUPFAM" id="SSF56808">
    <property type="entry name" value="Ribosomal protein L1"/>
    <property type="match status" value="1"/>
</dbReference>
<dbReference type="PROSITE" id="PS01199">
    <property type="entry name" value="RIBOSOMAL_L1"/>
    <property type="match status" value="1"/>
</dbReference>
<accession>A8EXK5</accession>
<comment type="function">
    <text evidence="1">Binds directly to 23S rRNA. The L1 stalk is quite mobile in the ribosome, and is involved in E site tRNA release.</text>
</comment>
<comment type="function">
    <text evidence="1">Protein L1 is also a translational repressor protein, it controls the translation of the L11 operon by binding to its mRNA.</text>
</comment>
<comment type="subunit">
    <text evidence="1">Part of the 50S ribosomal subunit.</text>
</comment>
<comment type="similarity">
    <text evidence="1">Belongs to the universal ribosomal protein uL1 family.</text>
</comment>
<sequence length="239" mass="25502">MSNKKDIAVKNSGGKKIREAREKVKSDTLYNLTNAVERLKSASYVKFDPTLEIVMKLGIDPRHSDQMIRGVVNLPAGTGKTVRVAVICKAERVEEAKSAGADLVGSTSIIDEIKAGKINFDVCIATPDMMAAIGSVARILGPKGLMPNPKLGTVTLDIKNAIKNAKSGQVEYRAEKAGIIHAGLGKLSFSDQDLLQNLNEFIEAVIKAKPAGLKGSYLKAMYLSSTMGASVQIDLTSIA</sequence>
<name>RL1_RICCK</name>
<feature type="chain" id="PRO_1000051919" description="Large ribosomal subunit protein uL1">
    <location>
        <begin position="1"/>
        <end position="239"/>
    </location>
</feature>
<evidence type="ECO:0000255" key="1">
    <source>
        <dbReference type="HAMAP-Rule" id="MF_01318"/>
    </source>
</evidence>
<evidence type="ECO:0000305" key="2"/>
<proteinExistence type="inferred from homology"/>
<gene>
    <name evidence="1" type="primary">rplA</name>
    <name type="ordered locus">A1E_00700</name>
</gene>
<reference key="1">
    <citation type="submission" date="2007-09" db="EMBL/GenBank/DDBJ databases">
        <title>Complete genome sequence of Rickettsia canadensis.</title>
        <authorList>
            <person name="Madan A."/>
            <person name="Fahey J."/>
            <person name="Helton E."/>
            <person name="Ketteman M."/>
            <person name="Madan A."/>
            <person name="Rodrigues S."/>
            <person name="Sanchez A."/>
            <person name="Whiting M."/>
            <person name="Dasch G."/>
            <person name="Eremeeva M."/>
        </authorList>
    </citation>
    <scope>NUCLEOTIDE SEQUENCE [LARGE SCALE GENOMIC DNA]</scope>
    <source>
        <strain>McKiel</strain>
    </source>
</reference>
<keyword id="KW-0678">Repressor</keyword>
<keyword id="KW-0687">Ribonucleoprotein</keyword>
<keyword id="KW-0689">Ribosomal protein</keyword>
<keyword id="KW-0694">RNA-binding</keyword>
<keyword id="KW-0699">rRNA-binding</keyword>
<keyword id="KW-0810">Translation regulation</keyword>
<keyword id="KW-0820">tRNA-binding</keyword>